<proteinExistence type="inferred from homology"/>
<protein>
    <recommendedName>
        <fullName evidence="1">Phosphoribosylaminoimidazole-succinocarboxamide synthase</fullName>
        <ecNumber evidence="1">6.3.2.6</ecNumber>
    </recommendedName>
    <alternativeName>
        <fullName evidence="1">SAICAR synthetase</fullName>
    </alternativeName>
</protein>
<sequence length="237" mass="26795">MTNELVYEGKAKRLFKTEEAGVLRVAYKDDATALNGVRKESFAGKGELNNQITSLIFSHLAGAGIESHFIRAISETEQLVKEVSIIPLEVVVRNVMAGSLAKRLGKEEGELIPNAIVEFYYKDDALDDPFINDDHVLYLELATTSEMDIIRQAARSINKVLQELFNQMNITLIDFKLEFGRDATGNILLADEISPDTCRLWDKETNQKLDKDVFRRNIGNLTDVYTEVLNRLKQVQN</sequence>
<comment type="catalytic activity">
    <reaction evidence="1">
        <text>5-amino-1-(5-phospho-D-ribosyl)imidazole-4-carboxylate + L-aspartate + ATP = (2S)-2-[5-amino-1-(5-phospho-beta-D-ribosyl)imidazole-4-carboxamido]succinate + ADP + phosphate + 2 H(+)</text>
        <dbReference type="Rhea" id="RHEA:22628"/>
        <dbReference type="ChEBI" id="CHEBI:15378"/>
        <dbReference type="ChEBI" id="CHEBI:29991"/>
        <dbReference type="ChEBI" id="CHEBI:30616"/>
        <dbReference type="ChEBI" id="CHEBI:43474"/>
        <dbReference type="ChEBI" id="CHEBI:58443"/>
        <dbReference type="ChEBI" id="CHEBI:77657"/>
        <dbReference type="ChEBI" id="CHEBI:456216"/>
        <dbReference type="EC" id="6.3.2.6"/>
    </reaction>
</comment>
<comment type="pathway">
    <text evidence="1">Purine metabolism; IMP biosynthesis via de novo pathway; 5-amino-1-(5-phospho-D-ribosyl)imidazole-4-carboxamide from 5-amino-1-(5-phospho-D-ribosyl)imidazole-4-carboxylate: step 1/2.</text>
</comment>
<comment type="similarity">
    <text evidence="1">Belongs to the SAICAR synthetase family.</text>
</comment>
<dbReference type="EC" id="6.3.2.6" evidence="1"/>
<dbReference type="EMBL" id="AE017262">
    <property type="protein sequence ID" value="AAT04568.1"/>
    <property type="molecule type" value="Genomic_DNA"/>
</dbReference>
<dbReference type="RefSeq" id="WP_003726214.1">
    <property type="nucleotide sequence ID" value="NC_002973.6"/>
</dbReference>
<dbReference type="SMR" id="Q71YP6"/>
<dbReference type="KEGG" id="lmf:LMOf2365_1797"/>
<dbReference type="HOGENOM" id="CLU_061495_2_0_9"/>
<dbReference type="UniPathway" id="UPA00074">
    <property type="reaction ID" value="UER00131"/>
</dbReference>
<dbReference type="GO" id="GO:0005524">
    <property type="term" value="F:ATP binding"/>
    <property type="evidence" value="ECO:0007669"/>
    <property type="project" value="UniProtKB-KW"/>
</dbReference>
<dbReference type="GO" id="GO:0004639">
    <property type="term" value="F:phosphoribosylaminoimidazolesuccinocarboxamide synthase activity"/>
    <property type="evidence" value="ECO:0007669"/>
    <property type="project" value="UniProtKB-UniRule"/>
</dbReference>
<dbReference type="GO" id="GO:0006189">
    <property type="term" value="P:'de novo' IMP biosynthetic process"/>
    <property type="evidence" value="ECO:0007669"/>
    <property type="project" value="UniProtKB-UniRule"/>
</dbReference>
<dbReference type="GO" id="GO:0009236">
    <property type="term" value="P:cobalamin biosynthetic process"/>
    <property type="evidence" value="ECO:0007669"/>
    <property type="project" value="InterPro"/>
</dbReference>
<dbReference type="CDD" id="cd01415">
    <property type="entry name" value="SAICAR_synt_PurC"/>
    <property type="match status" value="1"/>
</dbReference>
<dbReference type="FunFam" id="3.30.470.20:FF:000006">
    <property type="entry name" value="Phosphoribosylaminoimidazole-succinocarboxamide synthase"/>
    <property type="match status" value="1"/>
</dbReference>
<dbReference type="Gene3D" id="3.30.470.20">
    <property type="entry name" value="ATP-grasp fold, B domain"/>
    <property type="match status" value="1"/>
</dbReference>
<dbReference type="Gene3D" id="3.30.200.20">
    <property type="entry name" value="Phosphorylase Kinase, domain 1"/>
    <property type="match status" value="1"/>
</dbReference>
<dbReference type="HAMAP" id="MF_00137">
    <property type="entry name" value="SAICAR_synth"/>
    <property type="match status" value="1"/>
</dbReference>
<dbReference type="InterPro" id="IPR028923">
    <property type="entry name" value="SAICAR_synt/ADE2_N"/>
</dbReference>
<dbReference type="InterPro" id="IPR033934">
    <property type="entry name" value="SAICAR_synt_PurC"/>
</dbReference>
<dbReference type="InterPro" id="IPR001636">
    <property type="entry name" value="SAICAR_synth"/>
</dbReference>
<dbReference type="InterPro" id="IPR050089">
    <property type="entry name" value="SAICAR_synthetase"/>
</dbReference>
<dbReference type="InterPro" id="IPR018236">
    <property type="entry name" value="SAICAR_synthetase_CS"/>
</dbReference>
<dbReference type="NCBIfam" id="TIGR00081">
    <property type="entry name" value="purC"/>
    <property type="match status" value="1"/>
</dbReference>
<dbReference type="PANTHER" id="PTHR43599">
    <property type="entry name" value="MULTIFUNCTIONAL PROTEIN ADE2"/>
    <property type="match status" value="1"/>
</dbReference>
<dbReference type="PANTHER" id="PTHR43599:SF3">
    <property type="entry name" value="SI:DKEY-6E2.2"/>
    <property type="match status" value="1"/>
</dbReference>
<dbReference type="Pfam" id="PF01259">
    <property type="entry name" value="SAICAR_synt"/>
    <property type="match status" value="1"/>
</dbReference>
<dbReference type="SUPFAM" id="SSF56104">
    <property type="entry name" value="SAICAR synthase-like"/>
    <property type="match status" value="1"/>
</dbReference>
<dbReference type="PROSITE" id="PS01057">
    <property type="entry name" value="SAICAR_SYNTHETASE_1"/>
    <property type="match status" value="1"/>
</dbReference>
<dbReference type="PROSITE" id="PS01058">
    <property type="entry name" value="SAICAR_SYNTHETASE_2"/>
    <property type="match status" value="1"/>
</dbReference>
<accession>Q71YP6</accession>
<name>PUR7_LISMF</name>
<gene>
    <name evidence="1" type="primary">purC</name>
    <name type="ordered locus">LMOf2365_1797</name>
</gene>
<evidence type="ECO:0000255" key="1">
    <source>
        <dbReference type="HAMAP-Rule" id="MF_00137"/>
    </source>
</evidence>
<feature type="chain" id="PRO_0000100840" description="Phosphoribosylaminoimidazole-succinocarboxamide synthase">
    <location>
        <begin position="1"/>
        <end position="237"/>
    </location>
</feature>
<keyword id="KW-0067">ATP-binding</keyword>
<keyword id="KW-0436">Ligase</keyword>
<keyword id="KW-0547">Nucleotide-binding</keyword>
<keyword id="KW-0658">Purine biosynthesis</keyword>
<organism>
    <name type="scientific">Listeria monocytogenes serotype 4b (strain F2365)</name>
    <dbReference type="NCBI Taxonomy" id="265669"/>
    <lineage>
        <taxon>Bacteria</taxon>
        <taxon>Bacillati</taxon>
        <taxon>Bacillota</taxon>
        <taxon>Bacilli</taxon>
        <taxon>Bacillales</taxon>
        <taxon>Listeriaceae</taxon>
        <taxon>Listeria</taxon>
    </lineage>
</organism>
<reference key="1">
    <citation type="journal article" date="2004" name="Nucleic Acids Res.">
        <title>Whole genome comparisons of serotype 4b and 1/2a strains of the food-borne pathogen Listeria monocytogenes reveal new insights into the core genome components of this species.</title>
        <authorList>
            <person name="Nelson K.E."/>
            <person name="Fouts D.E."/>
            <person name="Mongodin E.F."/>
            <person name="Ravel J."/>
            <person name="DeBoy R.T."/>
            <person name="Kolonay J.F."/>
            <person name="Rasko D.A."/>
            <person name="Angiuoli S.V."/>
            <person name="Gill S.R."/>
            <person name="Paulsen I.T."/>
            <person name="Peterson J.D."/>
            <person name="White O."/>
            <person name="Nelson W.C."/>
            <person name="Nierman W.C."/>
            <person name="Beanan M.J."/>
            <person name="Brinkac L.M."/>
            <person name="Daugherty S.C."/>
            <person name="Dodson R.J."/>
            <person name="Durkin A.S."/>
            <person name="Madupu R."/>
            <person name="Haft D.H."/>
            <person name="Selengut J."/>
            <person name="Van Aken S.E."/>
            <person name="Khouri H.M."/>
            <person name="Fedorova N."/>
            <person name="Forberger H.A."/>
            <person name="Tran B."/>
            <person name="Kathariou S."/>
            <person name="Wonderling L.D."/>
            <person name="Uhlich G.A."/>
            <person name="Bayles D.O."/>
            <person name="Luchansky J.B."/>
            <person name="Fraser C.M."/>
        </authorList>
    </citation>
    <scope>NUCLEOTIDE SEQUENCE [LARGE SCALE GENOMIC DNA]</scope>
    <source>
        <strain>F2365</strain>
    </source>
</reference>